<dbReference type="EMBL" id="Z75208">
    <property type="protein sequence ID" value="CAA99574.1"/>
    <property type="molecule type" value="Genomic_DNA"/>
</dbReference>
<dbReference type="EMBL" id="AL009126">
    <property type="protein sequence ID" value="CAB14813.1"/>
    <property type="molecule type" value="Genomic_DNA"/>
</dbReference>
<dbReference type="PIR" id="E69620">
    <property type="entry name" value="E69620"/>
</dbReference>
<dbReference type="RefSeq" id="NP_390731.1">
    <property type="nucleotide sequence ID" value="NC_000964.3"/>
</dbReference>
<dbReference type="RefSeq" id="WP_004398765.1">
    <property type="nucleotide sequence ID" value="NZ_OZ025638.1"/>
</dbReference>
<dbReference type="SMR" id="P94550"/>
<dbReference type="FunCoup" id="P94550">
    <property type="interactions" value="618"/>
</dbReference>
<dbReference type="STRING" id="224308.BSU28530"/>
<dbReference type="jPOST" id="P94550"/>
<dbReference type="PaxDb" id="224308-BSU28530"/>
<dbReference type="EnsemblBacteria" id="CAB14813">
    <property type="protein sequence ID" value="CAB14813"/>
    <property type="gene ID" value="BSU_28530"/>
</dbReference>
<dbReference type="GeneID" id="937962"/>
<dbReference type="KEGG" id="bsu:BSU28530"/>
<dbReference type="PATRIC" id="fig|224308.179.peg.3100"/>
<dbReference type="eggNOG" id="COG2086">
    <property type="taxonomic scope" value="Bacteria"/>
</dbReference>
<dbReference type="InParanoid" id="P94550"/>
<dbReference type="OrthoDB" id="9804960at2"/>
<dbReference type="PhylomeDB" id="P94550"/>
<dbReference type="BioCyc" id="BSUB:BSU28530-MONOMER"/>
<dbReference type="Proteomes" id="UP000001570">
    <property type="component" value="Chromosome"/>
</dbReference>
<dbReference type="GO" id="GO:0009055">
    <property type="term" value="F:electron transfer activity"/>
    <property type="evidence" value="ECO:0000318"/>
    <property type="project" value="GO_Central"/>
</dbReference>
<dbReference type="CDD" id="cd01714">
    <property type="entry name" value="ETF_beta"/>
    <property type="match status" value="1"/>
</dbReference>
<dbReference type="FunFam" id="3.40.50.620:FF:000011">
    <property type="entry name" value="Electron transfer flavoprotein subunit beta"/>
    <property type="match status" value="1"/>
</dbReference>
<dbReference type="Gene3D" id="3.40.50.620">
    <property type="entry name" value="HUPs"/>
    <property type="match status" value="1"/>
</dbReference>
<dbReference type="InterPro" id="IPR000049">
    <property type="entry name" value="ET-Flavoprotein_bsu_CS"/>
</dbReference>
<dbReference type="InterPro" id="IPR014730">
    <property type="entry name" value="ETF_a/b_N"/>
</dbReference>
<dbReference type="InterPro" id="IPR012255">
    <property type="entry name" value="ETF_b"/>
</dbReference>
<dbReference type="InterPro" id="IPR033948">
    <property type="entry name" value="ETF_beta_N"/>
</dbReference>
<dbReference type="InterPro" id="IPR014729">
    <property type="entry name" value="Rossmann-like_a/b/a_fold"/>
</dbReference>
<dbReference type="PANTHER" id="PTHR21294">
    <property type="entry name" value="ELECTRON TRANSFER FLAVOPROTEIN BETA-SUBUNIT"/>
    <property type="match status" value="1"/>
</dbReference>
<dbReference type="PANTHER" id="PTHR21294:SF8">
    <property type="entry name" value="ELECTRON TRANSFER FLAVOPROTEIN SUBUNIT BETA"/>
    <property type="match status" value="1"/>
</dbReference>
<dbReference type="Pfam" id="PF01012">
    <property type="entry name" value="ETF"/>
    <property type="match status" value="1"/>
</dbReference>
<dbReference type="PIRSF" id="PIRSF000090">
    <property type="entry name" value="Beta-ETF"/>
    <property type="match status" value="1"/>
</dbReference>
<dbReference type="SMART" id="SM00893">
    <property type="entry name" value="ETF"/>
    <property type="match status" value="1"/>
</dbReference>
<dbReference type="SUPFAM" id="SSF52402">
    <property type="entry name" value="Adenine nucleotide alpha hydrolases-like"/>
    <property type="match status" value="1"/>
</dbReference>
<dbReference type="PROSITE" id="PS01065">
    <property type="entry name" value="ETF_BETA"/>
    <property type="match status" value="1"/>
</dbReference>
<accession>P94550</accession>
<name>ETFB_BACSU</name>
<comment type="function">
    <text evidence="1">The electron transfer flavoprotein serves as a specific electron acceptor for other dehydrogenases. It transfers the electrons to the main respiratory chain via ETF-ubiquinone oxidoreductase (ETF dehydrogenase) (By similarity).</text>
</comment>
<comment type="cofactor">
    <cofactor evidence="1">
        <name>FAD</name>
        <dbReference type="ChEBI" id="CHEBI:57692"/>
    </cofactor>
    <text evidence="1">Binds 1 FAD per dimer.</text>
</comment>
<comment type="cofactor">
    <cofactor evidence="1">
        <name>AMP</name>
        <dbReference type="ChEBI" id="CHEBI:456215"/>
    </cofactor>
    <text evidence="1">Binds 1 AMP per subunit.</text>
</comment>
<comment type="subunit">
    <text>Heterodimer of an alpha and a beta subunit.</text>
</comment>
<comment type="similarity">
    <text evidence="2">Belongs to the ETF beta-subunit/FixA family.</text>
</comment>
<sequence length="257" mass="28517">MNLFVLMKRTFDTEEKIVIETGKIQDDGAEWIINPYDEYAIEEAIQLKEKHGGTITAVTVGGEEAEKELRTALAMGCDQAVLINIEDDLDEPDQYSISQVLYHYMKDQEFDLILGGNVAIDGGSGQVAPRLAELLDIPCITTITKLEINGTDAEAERDVEGDVEKIKTTLPLLVTAQQGLNEPRYPSLPGIMKAKKKPLEELELDDLDLDEEDAEPKLKTIERFLPPKKEAGKLLQGEPAEQAKELVSLLRSEAKVI</sequence>
<evidence type="ECO:0000250" key="1"/>
<evidence type="ECO:0000305" key="2"/>
<feature type="chain" id="PRO_0000167875" description="Electron transfer flavoprotein subunit beta">
    <location>
        <begin position="1"/>
        <end position="257"/>
    </location>
</feature>
<keyword id="KW-0249">Electron transport</keyword>
<keyword id="KW-0274">FAD</keyword>
<keyword id="KW-0285">Flavoprotein</keyword>
<keyword id="KW-1185">Reference proteome</keyword>
<keyword id="KW-0813">Transport</keyword>
<proteinExistence type="inferred from homology"/>
<organism>
    <name type="scientific">Bacillus subtilis (strain 168)</name>
    <dbReference type="NCBI Taxonomy" id="224308"/>
    <lineage>
        <taxon>Bacteria</taxon>
        <taxon>Bacillati</taxon>
        <taxon>Bacillota</taxon>
        <taxon>Bacilli</taxon>
        <taxon>Bacillales</taxon>
        <taxon>Bacillaceae</taxon>
        <taxon>Bacillus</taxon>
    </lineage>
</organism>
<gene>
    <name type="primary">etfB</name>
    <name type="ordered locus">BSU28530</name>
</gene>
<protein>
    <recommendedName>
        <fullName>Electron transfer flavoprotein subunit beta</fullName>
        <shortName>Beta-ETF</shortName>
    </recommendedName>
    <alternativeName>
        <fullName>Electron transfer flavoprotein small subunit</fullName>
        <shortName>ETFSS</shortName>
    </alternativeName>
</protein>
<reference key="1">
    <citation type="journal article" date="1996" name="Microbiology">
        <title>The dnaB-pheA (256 degrees-240 degrees) region of the Bacillus subtilis chromosome containing genes responsible for stress responses, the utilization of plant cell walls and primary metabolism.</title>
        <authorList>
            <person name="Wipat A."/>
            <person name="Carter N."/>
            <person name="Brignell C.S."/>
            <person name="Guy J.B."/>
            <person name="Piper K."/>
            <person name="Sanders J."/>
            <person name="Emmerson P.T."/>
            <person name="Harwood C.R."/>
        </authorList>
    </citation>
    <scope>NUCLEOTIDE SEQUENCE [GENOMIC DNA]</scope>
    <source>
        <strain>168</strain>
    </source>
</reference>
<reference key="2">
    <citation type="journal article" date="1997" name="Nature">
        <title>The complete genome sequence of the Gram-positive bacterium Bacillus subtilis.</title>
        <authorList>
            <person name="Kunst F."/>
            <person name="Ogasawara N."/>
            <person name="Moszer I."/>
            <person name="Albertini A.M."/>
            <person name="Alloni G."/>
            <person name="Azevedo V."/>
            <person name="Bertero M.G."/>
            <person name="Bessieres P."/>
            <person name="Bolotin A."/>
            <person name="Borchert S."/>
            <person name="Borriss R."/>
            <person name="Boursier L."/>
            <person name="Brans A."/>
            <person name="Braun M."/>
            <person name="Brignell S.C."/>
            <person name="Bron S."/>
            <person name="Brouillet S."/>
            <person name="Bruschi C.V."/>
            <person name="Caldwell B."/>
            <person name="Capuano V."/>
            <person name="Carter N.M."/>
            <person name="Choi S.-K."/>
            <person name="Codani J.-J."/>
            <person name="Connerton I.F."/>
            <person name="Cummings N.J."/>
            <person name="Daniel R.A."/>
            <person name="Denizot F."/>
            <person name="Devine K.M."/>
            <person name="Duesterhoeft A."/>
            <person name="Ehrlich S.D."/>
            <person name="Emmerson P.T."/>
            <person name="Entian K.-D."/>
            <person name="Errington J."/>
            <person name="Fabret C."/>
            <person name="Ferrari E."/>
            <person name="Foulger D."/>
            <person name="Fritz C."/>
            <person name="Fujita M."/>
            <person name="Fujita Y."/>
            <person name="Fuma S."/>
            <person name="Galizzi A."/>
            <person name="Galleron N."/>
            <person name="Ghim S.-Y."/>
            <person name="Glaser P."/>
            <person name="Goffeau A."/>
            <person name="Golightly E.J."/>
            <person name="Grandi G."/>
            <person name="Guiseppi G."/>
            <person name="Guy B.J."/>
            <person name="Haga K."/>
            <person name="Haiech J."/>
            <person name="Harwood C.R."/>
            <person name="Henaut A."/>
            <person name="Hilbert H."/>
            <person name="Holsappel S."/>
            <person name="Hosono S."/>
            <person name="Hullo M.-F."/>
            <person name="Itaya M."/>
            <person name="Jones L.-M."/>
            <person name="Joris B."/>
            <person name="Karamata D."/>
            <person name="Kasahara Y."/>
            <person name="Klaerr-Blanchard M."/>
            <person name="Klein C."/>
            <person name="Kobayashi Y."/>
            <person name="Koetter P."/>
            <person name="Koningstein G."/>
            <person name="Krogh S."/>
            <person name="Kumano M."/>
            <person name="Kurita K."/>
            <person name="Lapidus A."/>
            <person name="Lardinois S."/>
            <person name="Lauber J."/>
            <person name="Lazarevic V."/>
            <person name="Lee S.-M."/>
            <person name="Levine A."/>
            <person name="Liu H."/>
            <person name="Masuda S."/>
            <person name="Mauel C."/>
            <person name="Medigue C."/>
            <person name="Medina N."/>
            <person name="Mellado R.P."/>
            <person name="Mizuno M."/>
            <person name="Moestl D."/>
            <person name="Nakai S."/>
            <person name="Noback M."/>
            <person name="Noone D."/>
            <person name="O'Reilly M."/>
            <person name="Ogawa K."/>
            <person name="Ogiwara A."/>
            <person name="Oudega B."/>
            <person name="Park S.-H."/>
            <person name="Parro V."/>
            <person name="Pohl T.M."/>
            <person name="Portetelle D."/>
            <person name="Porwollik S."/>
            <person name="Prescott A.M."/>
            <person name="Presecan E."/>
            <person name="Pujic P."/>
            <person name="Purnelle B."/>
            <person name="Rapoport G."/>
            <person name="Rey M."/>
            <person name="Reynolds S."/>
            <person name="Rieger M."/>
            <person name="Rivolta C."/>
            <person name="Rocha E."/>
            <person name="Roche B."/>
            <person name="Rose M."/>
            <person name="Sadaie Y."/>
            <person name="Sato T."/>
            <person name="Scanlan E."/>
            <person name="Schleich S."/>
            <person name="Schroeter R."/>
            <person name="Scoffone F."/>
            <person name="Sekiguchi J."/>
            <person name="Sekowska A."/>
            <person name="Seror S.J."/>
            <person name="Serror P."/>
            <person name="Shin B.-S."/>
            <person name="Soldo B."/>
            <person name="Sorokin A."/>
            <person name="Tacconi E."/>
            <person name="Takagi T."/>
            <person name="Takahashi H."/>
            <person name="Takemaru K."/>
            <person name="Takeuchi M."/>
            <person name="Tamakoshi A."/>
            <person name="Tanaka T."/>
            <person name="Terpstra P."/>
            <person name="Tognoni A."/>
            <person name="Tosato V."/>
            <person name="Uchiyama S."/>
            <person name="Vandenbol M."/>
            <person name="Vannier F."/>
            <person name="Vassarotti A."/>
            <person name="Viari A."/>
            <person name="Wambutt R."/>
            <person name="Wedler E."/>
            <person name="Wedler H."/>
            <person name="Weitzenegger T."/>
            <person name="Winters P."/>
            <person name="Wipat A."/>
            <person name="Yamamoto H."/>
            <person name="Yamane K."/>
            <person name="Yasumoto K."/>
            <person name="Yata K."/>
            <person name="Yoshida K."/>
            <person name="Yoshikawa H.-F."/>
            <person name="Zumstein E."/>
            <person name="Yoshikawa H."/>
            <person name="Danchin A."/>
        </authorList>
    </citation>
    <scope>NUCLEOTIDE SEQUENCE [LARGE SCALE GENOMIC DNA]</scope>
    <source>
        <strain>168</strain>
    </source>
</reference>